<comment type="subcellular location">
    <subcellularLocation>
        <location evidence="1">Cytoplasmic vesicle</location>
        <location evidence="1">Secretory vesicle</location>
        <location evidence="1">Acrosome</location>
    </subcellularLocation>
    <text evidence="1">Mainly found in the acrosomal cap region.</text>
</comment>
<comment type="domain">
    <text evidence="1">The BTB domain might play a role in targeting to acrosomal vesicles.</text>
</comment>
<reference key="1">
    <citation type="journal article" date="2004" name="Genome Res.">
        <title>The status, quality, and expansion of the NIH full-length cDNA project: the Mammalian Gene Collection (MGC).</title>
        <authorList>
            <consortium name="The MGC Project Team"/>
        </authorList>
    </citation>
    <scope>NUCLEOTIDE SEQUENCE [LARGE SCALE MRNA]</scope>
    <source>
        <tissue>Prostate</tissue>
    </source>
</reference>
<name>RCBT2_RAT</name>
<keyword id="KW-0968">Cytoplasmic vesicle</keyword>
<keyword id="KW-1185">Reference proteome</keyword>
<keyword id="KW-0677">Repeat</keyword>
<dbReference type="EMBL" id="BC061766">
    <property type="protein sequence ID" value="AAH61766.1"/>
    <property type="molecule type" value="mRNA"/>
</dbReference>
<dbReference type="RefSeq" id="NP_954515.1">
    <property type="nucleotide sequence ID" value="NM_199084.1"/>
</dbReference>
<dbReference type="RefSeq" id="XP_008769067.1">
    <property type="nucleotide sequence ID" value="XM_008770845.4"/>
</dbReference>
<dbReference type="RefSeq" id="XP_008769068.1">
    <property type="nucleotide sequence ID" value="XM_008770846.4"/>
</dbReference>
<dbReference type="RefSeq" id="XP_008769069.1">
    <property type="nucleotide sequence ID" value="XM_008770847.2"/>
</dbReference>
<dbReference type="RefSeq" id="XP_008769070.1">
    <property type="nucleotide sequence ID" value="XM_008770848.1"/>
</dbReference>
<dbReference type="RefSeq" id="XP_008769071.1">
    <property type="nucleotide sequence ID" value="XM_008770849.2"/>
</dbReference>
<dbReference type="RefSeq" id="XP_008769072.1">
    <property type="nucleotide sequence ID" value="XM_008770850.2"/>
</dbReference>
<dbReference type="RefSeq" id="XP_038949092.1">
    <property type="nucleotide sequence ID" value="XM_039093164.2"/>
</dbReference>
<dbReference type="RefSeq" id="XP_038949093.1">
    <property type="nucleotide sequence ID" value="XM_039093165.2"/>
</dbReference>
<dbReference type="RefSeq" id="XP_038949095.1">
    <property type="nucleotide sequence ID" value="XM_039093167.2"/>
</dbReference>
<dbReference type="RefSeq" id="XP_063130214.1">
    <property type="nucleotide sequence ID" value="XM_063274144.1"/>
</dbReference>
<dbReference type="RefSeq" id="XP_063130215.1">
    <property type="nucleotide sequence ID" value="XM_063274145.1"/>
</dbReference>
<dbReference type="SMR" id="Q6P798"/>
<dbReference type="FunCoup" id="Q6P798">
    <property type="interactions" value="1285"/>
</dbReference>
<dbReference type="IntAct" id="Q6P798">
    <property type="interactions" value="2"/>
</dbReference>
<dbReference type="STRING" id="10116.ENSRNOP00000070018"/>
<dbReference type="GlyGen" id="Q6P798">
    <property type="glycosylation" value="1 site"/>
</dbReference>
<dbReference type="PhosphoSitePlus" id="Q6P798"/>
<dbReference type="PaxDb" id="10116-ENSRNOP00000020836"/>
<dbReference type="Ensembl" id="ENSRNOT00000020836.7">
    <property type="protein sequence ID" value="ENSRNOP00000020836.4"/>
    <property type="gene ID" value="ENSRNOG00000015054.7"/>
</dbReference>
<dbReference type="GeneID" id="290363"/>
<dbReference type="KEGG" id="rno:290363"/>
<dbReference type="UCSC" id="RGD:735048">
    <property type="organism name" value="rat"/>
</dbReference>
<dbReference type="AGR" id="RGD:735048"/>
<dbReference type="CTD" id="1102"/>
<dbReference type="RGD" id="735048">
    <property type="gene designation" value="Rcbtb2"/>
</dbReference>
<dbReference type="eggNOG" id="KOG1426">
    <property type="taxonomic scope" value="Eukaryota"/>
</dbReference>
<dbReference type="GeneTree" id="ENSGT00940000158925"/>
<dbReference type="HOGENOM" id="CLU_029788_1_0_1"/>
<dbReference type="InParanoid" id="Q6P798"/>
<dbReference type="OMA" id="SYNEHTA"/>
<dbReference type="OrthoDB" id="16281at2759"/>
<dbReference type="PhylomeDB" id="Q6P798"/>
<dbReference type="TreeFam" id="TF329478"/>
<dbReference type="PRO" id="PR:Q6P798"/>
<dbReference type="Proteomes" id="UP000002494">
    <property type="component" value="Chromosome 15"/>
</dbReference>
<dbReference type="Bgee" id="ENSRNOG00000015054">
    <property type="expression patterns" value="Expressed in liver and 19 other cell types or tissues"/>
</dbReference>
<dbReference type="GO" id="GO:0001669">
    <property type="term" value="C:acrosomal vesicle"/>
    <property type="evidence" value="ECO:0000266"/>
    <property type="project" value="RGD"/>
</dbReference>
<dbReference type="GO" id="GO:0005737">
    <property type="term" value="C:cytoplasm"/>
    <property type="evidence" value="ECO:0000318"/>
    <property type="project" value="GO_Central"/>
</dbReference>
<dbReference type="GO" id="GO:0008283">
    <property type="term" value="P:cell population proliferation"/>
    <property type="evidence" value="ECO:0000266"/>
    <property type="project" value="RGD"/>
</dbReference>
<dbReference type="GO" id="GO:0048565">
    <property type="term" value="P:digestive tract development"/>
    <property type="evidence" value="ECO:0000266"/>
    <property type="project" value="RGD"/>
</dbReference>
<dbReference type="GO" id="GO:0001889">
    <property type="term" value="P:liver development"/>
    <property type="evidence" value="ECO:0000266"/>
    <property type="project" value="RGD"/>
</dbReference>
<dbReference type="GO" id="GO:0048535">
    <property type="term" value="P:lymph node development"/>
    <property type="evidence" value="ECO:0000266"/>
    <property type="project" value="RGD"/>
</dbReference>
<dbReference type="GO" id="GO:0048536">
    <property type="term" value="P:spleen development"/>
    <property type="evidence" value="ECO:0000266"/>
    <property type="project" value="RGD"/>
</dbReference>
<dbReference type="CDD" id="cd18529">
    <property type="entry name" value="BACK_RCBTB2"/>
    <property type="match status" value="1"/>
</dbReference>
<dbReference type="CDD" id="cd18354">
    <property type="entry name" value="BTB_POZ_RCBTB2_CHC1L"/>
    <property type="match status" value="1"/>
</dbReference>
<dbReference type="FunFam" id="2.130.10.30:FF:000033">
    <property type="entry name" value="RCC1 and BTB domain-containing protein 2"/>
    <property type="match status" value="1"/>
</dbReference>
<dbReference type="FunFam" id="2.130.10.30:FF:000038">
    <property type="entry name" value="RCC1 and BTB domain-containing protein 2"/>
    <property type="match status" value="1"/>
</dbReference>
<dbReference type="FunFam" id="1.25.40.420:FF:000006">
    <property type="entry name" value="RCC1 and BTB domain-containing protein 2 isoform X1"/>
    <property type="match status" value="1"/>
</dbReference>
<dbReference type="Gene3D" id="1.25.40.420">
    <property type="match status" value="1"/>
</dbReference>
<dbReference type="Gene3D" id="3.30.710.10">
    <property type="entry name" value="Potassium Channel Kv1.1, Chain A"/>
    <property type="match status" value="1"/>
</dbReference>
<dbReference type="Gene3D" id="2.130.10.30">
    <property type="entry name" value="Regulator of chromosome condensation 1/beta-lactamase-inhibitor protein II"/>
    <property type="match status" value="1"/>
</dbReference>
<dbReference type="InterPro" id="IPR000210">
    <property type="entry name" value="BTB/POZ_dom"/>
</dbReference>
<dbReference type="InterPro" id="IPR009091">
    <property type="entry name" value="RCC1/BLIP-II"/>
</dbReference>
<dbReference type="InterPro" id="IPR000408">
    <property type="entry name" value="Reg_chr_condens"/>
</dbReference>
<dbReference type="InterPro" id="IPR051625">
    <property type="entry name" value="Signaling_Regulatory_Domain"/>
</dbReference>
<dbReference type="InterPro" id="IPR011333">
    <property type="entry name" value="SKP1/BTB/POZ_sf"/>
</dbReference>
<dbReference type="PANTHER" id="PTHR22872">
    <property type="entry name" value="BTK-BINDING PROTEIN-RELATED"/>
    <property type="match status" value="1"/>
</dbReference>
<dbReference type="PANTHER" id="PTHR22872:SF3">
    <property type="entry name" value="RCC1 AND BTB DOMAIN CONTAINING PROTEIN 2"/>
    <property type="match status" value="1"/>
</dbReference>
<dbReference type="Pfam" id="PF00651">
    <property type="entry name" value="BTB"/>
    <property type="match status" value="1"/>
</dbReference>
<dbReference type="Pfam" id="PF25390">
    <property type="entry name" value="WD40_RLD"/>
    <property type="match status" value="1"/>
</dbReference>
<dbReference type="PRINTS" id="PR00633">
    <property type="entry name" value="RCCNDNSATION"/>
</dbReference>
<dbReference type="SMART" id="SM00225">
    <property type="entry name" value="BTB"/>
    <property type="match status" value="1"/>
</dbReference>
<dbReference type="SUPFAM" id="SSF54695">
    <property type="entry name" value="POZ domain"/>
    <property type="match status" value="1"/>
</dbReference>
<dbReference type="SUPFAM" id="SSF50985">
    <property type="entry name" value="RCC1/BLIP-II"/>
    <property type="match status" value="1"/>
</dbReference>
<dbReference type="PROSITE" id="PS50097">
    <property type="entry name" value="BTB"/>
    <property type="match status" value="1"/>
</dbReference>
<dbReference type="PROSITE" id="PS00626">
    <property type="entry name" value="RCC1_2"/>
    <property type="match status" value="1"/>
</dbReference>
<dbReference type="PROSITE" id="PS50012">
    <property type="entry name" value="RCC1_3"/>
    <property type="match status" value="4"/>
</dbReference>
<feature type="chain" id="PRO_0000206647" description="RCC1 and BTB domain-containing protein 2">
    <location>
        <begin position="1"/>
        <end position="551"/>
    </location>
</feature>
<feature type="repeat" description="RCC1 1" evidence="2">
    <location>
        <begin position="64"/>
        <end position="115"/>
    </location>
</feature>
<feature type="repeat" description="RCC1 2" evidence="2">
    <location>
        <begin position="117"/>
        <end position="169"/>
    </location>
</feature>
<feature type="repeat" description="RCC1 3" evidence="2">
    <location>
        <begin position="171"/>
        <end position="222"/>
    </location>
</feature>
<feature type="repeat" description="RCC1 4" evidence="2">
    <location>
        <begin position="223"/>
        <end position="274"/>
    </location>
</feature>
<feature type="repeat" description="RCC1 5" evidence="2">
    <location>
        <begin position="276"/>
        <end position="326"/>
    </location>
</feature>
<feature type="repeat" description="RCC1 6" evidence="2">
    <location>
        <begin position="328"/>
        <end position="382"/>
    </location>
</feature>
<feature type="domain" description="BTB" evidence="3">
    <location>
        <begin position="394"/>
        <end position="457"/>
    </location>
</feature>
<proteinExistence type="evidence at transcript level"/>
<accession>Q6P798</accession>
<evidence type="ECO:0000250" key="1">
    <source>
        <dbReference type="UniProtKB" id="Q99LJ7"/>
    </source>
</evidence>
<evidence type="ECO:0000255" key="2"/>
<evidence type="ECO:0000255" key="3">
    <source>
        <dbReference type="PROSITE-ProRule" id="PRU00037"/>
    </source>
</evidence>
<sequence>MEEEVPGFYGESGKSVQATLSSLKMLDVGKWPIFSLCSEEELQLIRQACVFGTAGNEVLYTTVNDEIFVLGTNCSGCLGVGDIQSTIEPRRLDSLTGKKIASLSYGSGPHIVLATTDGEVFTWGHNAYSQLGNGTTNHGLVPCHISTNLSNKQVIEVACGSYHSLVLTSDGEVFAWGYNNSGQVGSGSTANQPIPRRVTGCLQNKVVMSIACGQMCSMAVVDTGEVYVWGYNGNGQLGLGSSGNQPTPCRVAALQGIRVQRVACGYAHTLVLTDEGQIYAWGANSYGQLGTGNKSNQSYPTPVVVEKDRIIEIAACHSAHTSAAKSQGGHVYMWGQCRGQSVILPHLTHFCCTDDVFACFATPAVTWRLLSVEPDDHLTVAESLKREFDNPDTADLKFLVDGKYIYAHKVLLKIRCEHFRSSLEDSEDDIVEMSEFSYPVFRAFLEYLYTDNISLPPEEAVGLLDLATFYSETRLKKLCQQTIKQGICEENAIALLSAAVKYDAQDLEEFCFRFCINHLTVVTQTSGFAEMDHDLLKNFISKASRVGAFKN</sequence>
<organism>
    <name type="scientific">Rattus norvegicus</name>
    <name type="common">Rat</name>
    <dbReference type="NCBI Taxonomy" id="10116"/>
    <lineage>
        <taxon>Eukaryota</taxon>
        <taxon>Metazoa</taxon>
        <taxon>Chordata</taxon>
        <taxon>Craniata</taxon>
        <taxon>Vertebrata</taxon>
        <taxon>Euteleostomi</taxon>
        <taxon>Mammalia</taxon>
        <taxon>Eutheria</taxon>
        <taxon>Euarchontoglires</taxon>
        <taxon>Glires</taxon>
        <taxon>Rodentia</taxon>
        <taxon>Myomorpha</taxon>
        <taxon>Muroidea</taxon>
        <taxon>Muridae</taxon>
        <taxon>Murinae</taxon>
        <taxon>Rattus</taxon>
    </lineage>
</organism>
<protein>
    <recommendedName>
        <fullName>RCC1 and BTB domain-containing protein 2</fullName>
    </recommendedName>
    <alternativeName>
        <fullName>Chromosome condensation 1-like</fullName>
    </alternativeName>
    <alternativeName>
        <fullName>Regulator of chromosome condensation and BTB domain-containing protein 2</fullName>
    </alternativeName>
</protein>
<gene>
    <name type="primary">Rcbtb2</name>
    <name type="synonym">Chc1l</name>
</gene>